<protein>
    <recommendedName>
        <fullName evidence="1">1-(5-phosphoribosyl)-5-[(5-phosphoribosylamino)methylideneamino] imidazole-4-carboxamide isomerase</fullName>
        <ecNumber evidence="1">5.3.1.16</ecNumber>
    </recommendedName>
    <alternativeName>
        <fullName evidence="1">Phosphoribosylformimino-5-aminoimidazole carboxamide ribotide isomerase</fullName>
    </alternativeName>
</protein>
<accession>Q5WX95</accession>
<evidence type="ECO:0000255" key="1">
    <source>
        <dbReference type="HAMAP-Rule" id="MF_01014"/>
    </source>
</evidence>
<proteinExistence type="inferred from homology"/>
<name>HIS4_LEGPL</name>
<organism>
    <name type="scientific">Legionella pneumophila (strain Lens)</name>
    <dbReference type="NCBI Taxonomy" id="297245"/>
    <lineage>
        <taxon>Bacteria</taxon>
        <taxon>Pseudomonadati</taxon>
        <taxon>Pseudomonadota</taxon>
        <taxon>Gammaproteobacteria</taxon>
        <taxon>Legionellales</taxon>
        <taxon>Legionellaceae</taxon>
        <taxon>Legionella</taxon>
    </lineage>
</organism>
<dbReference type="EC" id="5.3.1.16" evidence="1"/>
<dbReference type="EMBL" id="CR628337">
    <property type="protein sequence ID" value="CAH15442.1"/>
    <property type="molecule type" value="Genomic_DNA"/>
</dbReference>
<dbReference type="RefSeq" id="WP_011215296.1">
    <property type="nucleotide sequence ID" value="NC_006369.1"/>
</dbReference>
<dbReference type="SMR" id="Q5WX95"/>
<dbReference type="KEGG" id="lpf:lpl1203"/>
<dbReference type="LegioList" id="lpl1203"/>
<dbReference type="HOGENOM" id="CLU_048577_1_2_6"/>
<dbReference type="UniPathway" id="UPA00031">
    <property type="reaction ID" value="UER00009"/>
</dbReference>
<dbReference type="Proteomes" id="UP000002517">
    <property type="component" value="Chromosome"/>
</dbReference>
<dbReference type="GO" id="GO:0005737">
    <property type="term" value="C:cytoplasm"/>
    <property type="evidence" value="ECO:0007669"/>
    <property type="project" value="UniProtKB-SubCell"/>
</dbReference>
<dbReference type="GO" id="GO:0003949">
    <property type="term" value="F:1-(5-phosphoribosyl)-5-[(5-phosphoribosylamino)methylideneamino]imidazole-4-carboxamide isomerase activity"/>
    <property type="evidence" value="ECO:0007669"/>
    <property type="project" value="UniProtKB-UniRule"/>
</dbReference>
<dbReference type="GO" id="GO:0000105">
    <property type="term" value="P:L-histidine biosynthetic process"/>
    <property type="evidence" value="ECO:0007669"/>
    <property type="project" value="UniProtKB-UniRule"/>
</dbReference>
<dbReference type="GO" id="GO:0000162">
    <property type="term" value="P:L-tryptophan biosynthetic process"/>
    <property type="evidence" value="ECO:0007669"/>
    <property type="project" value="TreeGrafter"/>
</dbReference>
<dbReference type="CDD" id="cd04732">
    <property type="entry name" value="HisA"/>
    <property type="match status" value="1"/>
</dbReference>
<dbReference type="FunFam" id="3.20.20.70:FF:000009">
    <property type="entry name" value="1-(5-phosphoribosyl)-5-[(5-phosphoribosylamino)methylideneamino] imidazole-4-carboxamide isomerase"/>
    <property type="match status" value="1"/>
</dbReference>
<dbReference type="Gene3D" id="3.20.20.70">
    <property type="entry name" value="Aldolase class I"/>
    <property type="match status" value="1"/>
</dbReference>
<dbReference type="HAMAP" id="MF_01014">
    <property type="entry name" value="HisA"/>
    <property type="match status" value="1"/>
</dbReference>
<dbReference type="InterPro" id="IPR013785">
    <property type="entry name" value="Aldolase_TIM"/>
</dbReference>
<dbReference type="InterPro" id="IPR006062">
    <property type="entry name" value="His_biosynth"/>
</dbReference>
<dbReference type="InterPro" id="IPR044524">
    <property type="entry name" value="Isoase_HisA-like"/>
</dbReference>
<dbReference type="InterPro" id="IPR023016">
    <property type="entry name" value="Isoase_HisA-like_bact"/>
</dbReference>
<dbReference type="InterPro" id="IPR011060">
    <property type="entry name" value="RibuloseP-bd_barrel"/>
</dbReference>
<dbReference type="PANTHER" id="PTHR43090">
    <property type="entry name" value="1-(5-PHOSPHORIBOSYL)-5-[(5-PHOSPHORIBOSYLAMINO)METHYLIDENEAMINO] IMIDAZOLE-4-CARBOXAMIDE ISOMERASE"/>
    <property type="match status" value="1"/>
</dbReference>
<dbReference type="PANTHER" id="PTHR43090:SF2">
    <property type="entry name" value="1-(5-PHOSPHORIBOSYL)-5-[(5-PHOSPHORIBOSYLAMINO)METHYLIDENEAMINO] IMIDAZOLE-4-CARBOXAMIDE ISOMERASE"/>
    <property type="match status" value="1"/>
</dbReference>
<dbReference type="Pfam" id="PF00977">
    <property type="entry name" value="His_biosynth"/>
    <property type="match status" value="1"/>
</dbReference>
<dbReference type="SUPFAM" id="SSF51366">
    <property type="entry name" value="Ribulose-phoshate binding barrel"/>
    <property type="match status" value="1"/>
</dbReference>
<gene>
    <name evidence="1" type="primary">hisA</name>
    <name type="ordered locus">lpl1203</name>
</gene>
<sequence length="239" mass="26283">MLVIPAIDLQSGRCVRLKQGRFDQVTQFSVFPIERALHFAKLGAKRLHVVDLDGARSGKMQQLELICSMQKTGIAIQAGGGIRSIEQALECSNAGISQLVIGSLAITNPDLTIQIIEKIKPENIVLALDVRVDTKVPLLAINGWQNNSTSSLWEVVSYYENHGIKHILCTDIACDGMMNGPNFDLYQQAVEYFPQIAWQASGGIRHMQDITTLGSLGISAVILGLMLYQDNVNFEELLC</sequence>
<keyword id="KW-0028">Amino-acid biosynthesis</keyword>
<keyword id="KW-0963">Cytoplasm</keyword>
<keyword id="KW-0368">Histidine biosynthesis</keyword>
<keyword id="KW-0413">Isomerase</keyword>
<comment type="catalytic activity">
    <reaction evidence="1">
        <text>1-(5-phospho-beta-D-ribosyl)-5-[(5-phospho-beta-D-ribosylamino)methylideneamino]imidazole-4-carboxamide = 5-[(5-phospho-1-deoxy-D-ribulos-1-ylimino)methylamino]-1-(5-phospho-beta-D-ribosyl)imidazole-4-carboxamide</text>
        <dbReference type="Rhea" id="RHEA:15469"/>
        <dbReference type="ChEBI" id="CHEBI:58435"/>
        <dbReference type="ChEBI" id="CHEBI:58525"/>
        <dbReference type="EC" id="5.3.1.16"/>
    </reaction>
</comment>
<comment type="pathway">
    <text evidence="1">Amino-acid biosynthesis; L-histidine biosynthesis; L-histidine from 5-phospho-alpha-D-ribose 1-diphosphate: step 4/9.</text>
</comment>
<comment type="subcellular location">
    <subcellularLocation>
        <location evidence="1">Cytoplasm</location>
    </subcellularLocation>
</comment>
<comment type="similarity">
    <text evidence="1">Belongs to the HisA/HisF family.</text>
</comment>
<feature type="chain" id="PRO_0000142016" description="1-(5-phosphoribosyl)-5-[(5-phosphoribosylamino)methylideneamino] imidazole-4-carboxamide isomerase">
    <location>
        <begin position="1"/>
        <end position="239"/>
    </location>
</feature>
<feature type="active site" description="Proton acceptor" evidence="1">
    <location>
        <position position="8"/>
    </location>
</feature>
<feature type="active site" description="Proton donor" evidence="1">
    <location>
        <position position="129"/>
    </location>
</feature>
<reference key="1">
    <citation type="journal article" date="2004" name="Nat. Genet.">
        <title>Evidence in the Legionella pneumophila genome for exploitation of host cell functions and high genome plasticity.</title>
        <authorList>
            <person name="Cazalet C."/>
            <person name="Rusniok C."/>
            <person name="Brueggemann H."/>
            <person name="Zidane N."/>
            <person name="Magnier A."/>
            <person name="Ma L."/>
            <person name="Tichit M."/>
            <person name="Jarraud S."/>
            <person name="Bouchier C."/>
            <person name="Vandenesch F."/>
            <person name="Kunst F."/>
            <person name="Etienne J."/>
            <person name="Glaser P."/>
            <person name="Buchrieser C."/>
        </authorList>
    </citation>
    <scope>NUCLEOTIDE SEQUENCE [LARGE SCALE GENOMIC DNA]</scope>
    <source>
        <strain>Lens</strain>
    </source>
</reference>